<organism>
    <name type="scientific">Clostridium perfringens (strain SM101 / Type A)</name>
    <dbReference type="NCBI Taxonomy" id="289380"/>
    <lineage>
        <taxon>Bacteria</taxon>
        <taxon>Bacillati</taxon>
        <taxon>Bacillota</taxon>
        <taxon>Clostridia</taxon>
        <taxon>Eubacteriales</taxon>
        <taxon>Clostridiaceae</taxon>
        <taxon>Clostridium</taxon>
    </lineage>
</organism>
<gene>
    <name evidence="1" type="primary">greA</name>
    <name type="ordered locus">CPR_2468</name>
</gene>
<proteinExistence type="inferred from homology"/>
<reference key="1">
    <citation type="journal article" date="2006" name="Genome Res.">
        <title>Skewed genomic variability in strains of the toxigenic bacterial pathogen, Clostridium perfringens.</title>
        <authorList>
            <person name="Myers G.S.A."/>
            <person name="Rasko D.A."/>
            <person name="Cheung J.K."/>
            <person name="Ravel J."/>
            <person name="Seshadri R."/>
            <person name="DeBoy R.T."/>
            <person name="Ren Q."/>
            <person name="Varga J."/>
            <person name="Awad M.M."/>
            <person name="Brinkac L.M."/>
            <person name="Daugherty S.C."/>
            <person name="Haft D.H."/>
            <person name="Dodson R.J."/>
            <person name="Madupu R."/>
            <person name="Nelson W.C."/>
            <person name="Rosovitz M.J."/>
            <person name="Sullivan S.A."/>
            <person name="Khouri H."/>
            <person name="Dimitrov G.I."/>
            <person name="Watkins K.L."/>
            <person name="Mulligan S."/>
            <person name="Benton J."/>
            <person name="Radune D."/>
            <person name="Fisher D.J."/>
            <person name="Atkins H.S."/>
            <person name="Hiscox T."/>
            <person name="Jost B.H."/>
            <person name="Billington S.J."/>
            <person name="Songer J.G."/>
            <person name="McClane B.A."/>
            <person name="Titball R.W."/>
            <person name="Rood J.I."/>
            <person name="Melville S.B."/>
            <person name="Paulsen I.T."/>
        </authorList>
    </citation>
    <scope>NUCLEOTIDE SEQUENCE [LARGE SCALE GENOMIC DNA]</scope>
    <source>
        <strain>SM101 / Type A</strain>
    </source>
</reference>
<protein>
    <recommendedName>
        <fullName evidence="1">Transcription elongation factor GreA</fullName>
    </recommendedName>
    <alternativeName>
        <fullName evidence="1">Transcript cleavage factor GreA</fullName>
    </alternativeName>
</protein>
<evidence type="ECO:0000255" key="1">
    <source>
        <dbReference type="HAMAP-Rule" id="MF_00105"/>
    </source>
</evidence>
<keyword id="KW-0175">Coiled coil</keyword>
<keyword id="KW-0238">DNA-binding</keyword>
<keyword id="KW-0804">Transcription</keyword>
<keyword id="KW-0805">Transcription regulation</keyword>
<sequence length="158" mass="17660">MSEKKHIMTYEGVKKLEDELEYLKTVKRKEITEKIKVALGYGDLSENSEYDEAKNEQAFTEGRIIQLENMLKNAVVVDESEISTDIVTVGSIVKVMDFDFDEEVEYSIVGSAEADPMNFKISNESPVGEGLMGKKVGDVVEIEVPGGTTKFEVLGIRR</sequence>
<dbReference type="EMBL" id="CP000312">
    <property type="protein sequence ID" value="ABG86745.1"/>
    <property type="molecule type" value="Genomic_DNA"/>
</dbReference>
<dbReference type="RefSeq" id="WP_003450338.1">
    <property type="nucleotide sequence ID" value="NZ_CAXVJE010000014.1"/>
</dbReference>
<dbReference type="SMR" id="Q0SQ85"/>
<dbReference type="GeneID" id="93000937"/>
<dbReference type="KEGG" id="cpr:CPR_2468"/>
<dbReference type="Proteomes" id="UP000001824">
    <property type="component" value="Chromosome"/>
</dbReference>
<dbReference type="GO" id="GO:0003677">
    <property type="term" value="F:DNA binding"/>
    <property type="evidence" value="ECO:0007669"/>
    <property type="project" value="UniProtKB-UniRule"/>
</dbReference>
<dbReference type="GO" id="GO:0070063">
    <property type="term" value="F:RNA polymerase binding"/>
    <property type="evidence" value="ECO:0007669"/>
    <property type="project" value="InterPro"/>
</dbReference>
<dbReference type="GO" id="GO:0006354">
    <property type="term" value="P:DNA-templated transcription elongation"/>
    <property type="evidence" value="ECO:0007669"/>
    <property type="project" value="TreeGrafter"/>
</dbReference>
<dbReference type="GO" id="GO:0032784">
    <property type="term" value="P:regulation of DNA-templated transcription elongation"/>
    <property type="evidence" value="ECO:0007669"/>
    <property type="project" value="UniProtKB-UniRule"/>
</dbReference>
<dbReference type="FunFam" id="1.10.287.180:FF:000001">
    <property type="entry name" value="Transcription elongation factor GreA"/>
    <property type="match status" value="1"/>
</dbReference>
<dbReference type="FunFam" id="3.10.50.30:FF:000001">
    <property type="entry name" value="Transcription elongation factor GreA"/>
    <property type="match status" value="1"/>
</dbReference>
<dbReference type="Gene3D" id="3.10.50.30">
    <property type="entry name" value="Transcription elongation factor, GreA/GreB, C-terminal domain"/>
    <property type="match status" value="1"/>
</dbReference>
<dbReference type="Gene3D" id="1.10.287.180">
    <property type="entry name" value="Transcription elongation factor, GreA/GreB, N-terminal domain"/>
    <property type="match status" value="1"/>
</dbReference>
<dbReference type="HAMAP" id="MF_00105">
    <property type="entry name" value="GreA_GreB"/>
    <property type="match status" value="1"/>
</dbReference>
<dbReference type="InterPro" id="IPR036953">
    <property type="entry name" value="GreA/GreB_C_sf"/>
</dbReference>
<dbReference type="InterPro" id="IPR018151">
    <property type="entry name" value="TF_GreA/GreB_CS"/>
</dbReference>
<dbReference type="InterPro" id="IPR006359">
    <property type="entry name" value="Tscrpt_elong_fac_GreA"/>
</dbReference>
<dbReference type="InterPro" id="IPR028624">
    <property type="entry name" value="Tscrpt_elong_fac_GreA/B"/>
</dbReference>
<dbReference type="InterPro" id="IPR001437">
    <property type="entry name" value="Tscrpt_elong_fac_GreA/B_C"/>
</dbReference>
<dbReference type="InterPro" id="IPR023459">
    <property type="entry name" value="Tscrpt_elong_fac_GreA/B_fam"/>
</dbReference>
<dbReference type="InterPro" id="IPR022691">
    <property type="entry name" value="Tscrpt_elong_fac_GreA/B_N"/>
</dbReference>
<dbReference type="InterPro" id="IPR036805">
    <property type="entry name" value="Tscrpt_elong_fac_GreA/B_N_sf"/>
</dbReference>
<dbReference type="NCBIfam" id="TIGR01462">
    <property type="entry name" value="greA"/>
    <property type="match status" value="1"/>
</dbReference>
<dbReference type="NCBIfam" id="NF001261">
    <property type="entry name" value="PRK00226.1-2"/>
    <property type="match status" value="1"/>
</dbReference>
<dbReference type="NCBIfam" id="NF001263">
    <property type="entry name" value="PRK00226.1-4"/>
    <property type="match status" value="1"/>
</dbReference>
<dbReference type="PANTHER" id="PTHR30437">
    <property type="entry name" value="TRANSCRIPTION ELONGATION FACTOR GREA"/>
    <property type="match status" value="1"/>
</dbReference>
<dbReference type="PANTHER" id="PTHR30437:SF4">
    <property type="entry name" value="TRANSCRIPTION ELONGATION FACTOR GREA"/>
    <property type="match status" value="1"/>
</dbReference>
<dbReference type="Pfam" id="PF01272">
    <property type="entry name" value="GreA_GreB"/>
    <property type="match status" value="1"/>
</dbReference>
<dbReference type="Pfam" id="PF03449">
    <property type="entry name" value="GreA_GreB_N"/>
    <property type="match status" value="1"/>
</dbReference>
<dbReference type="PIRSF" id="PIRSF006092">
    <property type="entry name" value="GreA_GreB"/>
    <property type="match status" value="1"/>
</dbReference>
<dbReference type="SUPFAM" id="SSF54534">
    <property type="entry name" value="FKBP-like"/>
    <property type="match status" value="1"/>
</dbReference>
<dbReference type="SUPFAM" id="SSF46557">
    <property type="entry name" value="GreA transcript cleavage protein, N-terminal domain"/>
    <property type="match status" value="1"/>
</dbReference>
<dbReference type="PROSITE" id="PS00829">
    <property type="entry name" value="GREAB_1"/>
    <property type="match status" value="1"/>
</dbReference>
<feature type="chain" id="PRO_1000094168" description="Transcription elongation factor GreA">
    <location>
        <begin position="1"/>
        <end position="158"/>
    </location>
</feature>
<feature type="coiled-coil region" evidence="1">
    <location>
        <begin position="47"/>
        <end position="74"/>
    </location>
</feature>
<name>GREA_CLOPS</name>
<accession>Q0SQ85</accession>
<comment type="function">
    <text evidence="1">Necessary for efficient RNA polymerase transcription elongation past template-encoded arresting sites. The arresting sites in DNA have the property of trapping a certain fraction of elongating RNA polymerases that pass through, resulting in locked ternary complexes. Cleavage of the nascent transcript by cleavage factors such as GreA or GreB allows the resumption of elongation from the new 3'terminus. GreA releases sequences of 2 to 3 nucleotides.</text>
</comment>
<comment type="similarity">
    <text evidence="1">Belongs to the GreA/GreB family.</text>
</comment>